<evidence type="ECO:0000255" key="1">
    <source>
        <dbReference type="HAMAP-Rule" id="MF_01427"/>
    </source>
</evidence>
<evidence type="ECO:0000255" key="2">
    <source>
        <dbReference type="PROSITE-ProRule" id="PRU01175"/>
    </source>
</evidence>
<keyword id="KW-0238">DNA-binding</keyword>
<keyword id="KW-0269">Exonuclease</keyword>
<keyword id="KW-0378">Hydrolase</keyword>
<keyword id="KW-0540">Nuclease</keyword>
<keyword id="KW-1185">Reference proteome</keyword>
<organism>
    <name type="scientific">Shouchella clausii (strain KSM-K16)</name>
    <name type="common">Alkalihalobacillus clausii</name>
    <dbReference type="NCBI Taxonomy" id="66692"/>
    <lineage>
        <taxon>Bacteria</taxon>
        <taxon>Bacillati</taxon>
        <taxon>Bacillota</taxon>
        <taxon>Bacilli</taxon>
        <taxon>Bacillales</taxon>
        <taxon>Bacillaceae</taxon>
        <taxon>Shouchella</taxon>
    </lineage>
</organism>
<comment type="function">
    <text evidence="1">Shows a 3'-5' exoribonuclease activity.</text>
</comment>
<comment type="similarity">
    <text evidence="1">Belongs to the YhaM family.</text>
</comment>
<proteinExistence type="inferred from homology"/>
<feature type="chain" id="PRO_0000109860" description="3'-5' exoribonuclease YhaM">
    <location>
        <begin position="1"/>
        <end position="319"/>
    </location>
</feature>
<feature type="domain" description="HD" evidence="2">
    <location>
        <begin position="163"/>
        <end position="279"/>
    </location>
</feature>
<feature type="DNA-binding region" description="OB">
    <location>
        <begin position="12"/>
        <end position="90"/>
    </location>
</feature>
<sequence>MAKGIRHHRVGEAVDGYLLIKTATKQIASNSKPFLTLILGDHTGEIEAKLWGISPEDEATFVNKTIVHIQGDVIDYRGRLQLKIASIRPTSAMDGVHLNDFVRSAPLAPNDMLDEVNQYIFEIHNPHIQRITRFLLKKHQQAFLESPAATKNHHEFMSGLAFHVVSMLRIGKSLIELYPTLDKDLLYAGIILHDLGKVRELSGAIDTTYTLEGKLLGHISIMSNEIAQAAKELEIDGEEVLILQHLILSHHGKGEWGSPKTPVVREAEVLHLIDNIDAKINMMDRALERVQPGEFSERVMALDNRSFYKPSFHKKPIEL</sequence>
<name>YHAM_SHOC1</name>
<reference key="1">
    <citation type="submission" date="2003-10" db="EMBL/GenBank/DDBJ databases">
        <title>The complete genome sequence of the alkaliphilic Bacillus clausii KSM-K16.</title>
        <authorList>
            <person name="Takaki Y."/>
            <person name="Kageyama Y."/>
            <person name="Shimamura S."/>
            <person name="Suzuki H."/>
            <person name="Nishi S."/>
            <person name="Hatada Y."/>
            <person name="Kawai S."/>
            <person name="Ito S."/>
            <person name="Horikoshi K."/>
        </authorList>
    </citation>
    <scope>NUCLEOTIDE SEQUENCE [LARGE SCALE GENOMIC DNA]</scope>
    <source>
        <strain>KSM-K16</strain>
    </source>
</reference>
<protein>
    <recommendedName>
        <fullName evidence="1">3'-5' exoribonuclease YhaM</fullName>
        <ecNumber evidence="1">3.1.-.-</ecNumber>
    </recommendedName>
</protein>
<accession>Q5WHU5</accession>
<gene>
    <name evidence="1" type="primary">yhaM</name>
    <name type="ordered locus">ABC1525</name>
</gene>
<dbReference type="EC" id="3.1.-.-" evidence="1"/>
<dbReference type="EMBL" id="AP006627">
    <property type="protein sequence ID" value="BAD64060.1"/>
    <property type="molecule type" value="Genomic_DNA"/>
</dbReference>
<dbReference type="RefSeq" id="WP_011246369.1">
    <property type="nucleotide sequence ID" value="NC_006582.1"/>
</dbReference>
<dbReference type="SMR" id="Q5WHU5"/>
<dbReference type="STRING" id="66692.ABC1525"/>
<dbReference type="GeneID" id="86925602"/>
<dbReference type="KEGG" id="bcl:ABC1525"/>
<dbReference type="eggNOG" id="COG3481">
    <property type="taxonomic scope" value="Bacteria"/>
</dbReference>
<dbReference type="HOGENOM" id="CLU_056349_2_0_9"/>
<dbReference type="OrthoDB" id="9778453at2"/>
<dbReference type="Proteomes" id="UP000001168">
    <property type="component" value="Chromosome"/>
</dbReference>
<dbReference type="GO" id="GO:0000175">
    <property type="term" value="F:3'-5'-RNA exonuclease activity"/>
    <property type="evidence" value="ECO:0007669"/>
    <property type="project" value="UniProtKB-UniRule"/>
</dbReference>
<dbReference type="GO" id="GO:0003677">
    <property type="term" value="F:DNA binding"/>
    <property type="evidence" value="ECO:0007669"/>
    <property type="project" value="UniProtKB-KW"/>
</dbReference>
<dbReference type="GO" id="GO:0031125">
    <property type="term" value="P:rRNA 3'-end processing"/>
    <property type="evidence" value="ECO:0007669"/>
    <property type="project" value="TreeGrafter"/>
</dbReference>
<dbReference type="CDD" id="cd00077">
    <property type="entry name" value="HDc"/>
    <property type="match status" value="1"/>
</dbReference>
<dbReference type="CDD" id="cd04492">
    <property type="entry name" value="YhaM_OBF_like"/>
    <property type="match status" value="1"/>
</dbReference>
<dbReference type="FunFam" id="1.10.3210.10:FF:000008">
    <property type="entry name" value="3'-5' exoribonuclease YhaM"/>
    <property type="match status" value="1"/>
</dbReference>
<dbReference type="Gene3D" id="1.10.3210.10">
    <property type="entry name" value="Hypothetical protein af1432"/>
    <property type="match status" value="1"/>
</dbReference>
<dbReference type="Gene3D" id="2.40.50.140">
    <property type="entry name" value="Nucleic acid-binding proteins"/>
    <property type="match status" value="1"/>
</dbReference>
<dbReference type="HAMAP" id="MF_01427">
    <property type="entry name" value="3_5_Exoribonuc_YhaM"/>
    <property type="match status" value="1"/>
</dbReference>
<dbReference type="InterPro" id="IPR020873">
    <property type="entry name" value="3'-5'_exoribonuclease_YhaM"/>
</dbReference>
<dbReference type="InterPro" id="IPR003607">
    <property type="entry name" value="HD/PDEase_dom"/>
</dbReference>
<dbReference type="InterPro" id="IPR006674">
    <property type="entry name" value="HD_domain"/>
</dbReference>
<dbReference type="InterPro" id="IPR012340">
    <property type="entry name" value="NA-bd_OB-fold"/>
</dbReference>
<dbReference type="InterPro" id="IPR004365">
    <property type="entry name" value="NA-bd_OB_tRNA"/>
</dbReference>
<dbReference type="InterPro" id="IPR050798">
    <property type="entry name" value="YhaM_exoribonuc/phosphodiest"/>
</dbReference>
<dbReference type="NCBIfam" id="NF010007">
    <property type="entry name" value="PRK13480.1"/>
    <property type="match status" value="1"/>
</dbReference>
<dbReference type="PANTHER" id="PTHR37294">
    <property type="entry name" value="3'-5' EXORIBONUCLEASE YHAM"/>
    <property type="match status" value="1"/>
</dbReference>
<dbReference type="PANTHER" id="PTHR37294:SF1">
    <property type="entry name" value="3'-5' EXORIBONUCLEASE YHAM"/>
    <property type="match status" value="1"/>
</dbReference>
<dbReference type="Pfam" id="PF01966">
    <property type="entry name" value="HD"/>
    <property type="match status" value="1"/>
</dbReference>
<dbReference type="Pfam" id="PF01336">
    <property type="entry name" value="tRNA_anti-codon"/>
    <property type="match status" value="1"/>
</dbReference>
<dbReference type="SUPFAM" id="SSF109604">
    <property type="entry name" value="HD-domain/PDEase-like"/>
    <property type="match status" value="1"/>
</dbReference>
<dbReference type="SUPFAM" id="SSF50249">
    <property type="entry name" value="Nucleic acid-binding proteins"/>
    <property type="match status" value="1"/>
</dbReference>
<dbReference type="PROSITE" id="PS51831">
    <property type="entry name" value="HD"/>
    <property type="match status" value="1"/>
</dbReference>